<sequence>MARIAGVDLPRDKRVEIGLTYIYGIGLTRSKEILSKIELDPDTRVRDLPDNAIAQLREIIETDYQVEGDLRRFESMNIKRLADIGCYRGRRHRLNLPVRGQRTRTNARTRRGARQTVAGKKKAPSK</sequence>
<comment type="function">
    <text evidence="1">Located at the top of the head of the 30S subunit, it contacts several helices of the 16S rRNA.</text>
</comment>
<comment type="subunit">
    <text>Part of the 30S ribosomal subunit.</text>
</comment>
<comment type="subcellular location">
    <subcellularLocation>
        <location>Plastid</location>
        <location>Cyanelle</location>
    </subcellularLocation>
</comment>
<comment type="similarity">
    <text evidence="1">Belongs to the universal ribosomal protein uS13 family.</text>
</comment>
<name>RR13_CYAPA</name>
<feature type="chain" id="PRO_0000132197" description="Small ribosomal subunit protein uS13c">
    <location>
        <begin position="1"/>
        <end position="126"/>
    </location>
</feature>
<feature type="region of interest" description="Disordered" evidence="2">
    <location>
        <begin position="100"/>
        <end position="126"/>
    </location>
</feature>
<feature type="compositionally biased region" description="Basic residues" evidence="2">
    <location>
        <begin position="101"/>
        <end position="126"/>
    </location>
</feature>
<protein>
    <recommendedName>
        <fullName evidence="3">Small ribosomal subunit protein uS13c</fullName>
    </recommendedName>
    <alternativeName>
        <fullName>Cyanelle 30S ribosomal protein S13</fullName>
    </alternativeName>
</protein>
<organism>
    <name type="scientific">Cyanophora paradoxa</name>
    <dbReference type="NCBI Taxonomy" id="2762"/>
    <lineage>
        <taxon>Eukaryota</taxon>
        <taxon>Glaucocystophyceae</taxon>
        <taxon>Cyanophoraceae</taxon>
        <taxon>Cyanophora</taxon>
    </lineage>
</organism>
<gene>
    <name evidence="1" type="primary">rps13</name>
</gene>
<keyword id="KW-0194">Cyanelle</keyword>
<keyword id="KW-0934">Plastid</keyword>
<keyword id="KW-0687">Ribonucleoprotein</keyword>
<keyword id="KW-0689">Ribosomal protein</keyword>
<keyword id="KW-0694">RNA-binding</keyword>
<keyword id="KW-0699">rRNA-binding</keyword>
<geneLocation type="cyanelle"/>
<reference key="1">
    <citation type="journal article" date="1995" name="Plant Mol. Biol. Rep.">
        <title>Nucleotide sequence of the cyanelle DNA from Cyanophora paradoxa.</title>
        <authorList>
            <person name="Stirewalt V.L."/>
            <person name="Michalowski C.B."/>
            <person name="Loeffelhardt W."/>
            <person name="Bohnert H.J."/>
            <person name="Bryant D.A."/>
        </authorList>
    </citation>
    <scope>NUCLEOTIDE SEQUENCE [LARGE SCALE GENOMIC DNA]</scope>
    <source>
        <strain>UTEX LB 555 / Pringsheim</strain>
    </source>
</reference>
<reference key="2">
    <citation type="book" date="1997" name="Eukaryotism and symbiosis">
        <title>The complete sequence of the cyanelle genome of Cyanophora paradoxa: the genetic complexity of a primitive plastid.</title>
        <editorList>
            <person name="Schenk H.E.A."/>
            <person name="Herrmann R."/>
            <person name="Jeon K.W."/>
            <person name="Mueller N.E."/>
            <person name="Schwemmler W."/>
        </editorList>
        <authorList>
            <person name="Loeffelhardt W."/>
            <person name="Stirewalt V.L."/>
            <person name="Michalowski C.B."/>
            <person name="Annarella M."/>
            <person name="Farley J.Y."/>
            <person name="Schluchter W.M."/>
            <person name="Chung S."/>
            <person name="Newmann-Spallart C."/>
            <person name="Steiner J.M."/>
            <person name="Jakowitsch J."/>
            <person name="Bohnert H.J."/>
            <person name="Bryant D.A."/>
        </authorList>
    </citation>
    <scope>NUCLEOTIDE SEQUENCE [LARGE SCALE GENOMIC DNA]</scope>
    <source>
        <strain>UTEX LB 555 / Pringsheim</strain>
    </source>
</reference>
<evidence type="ECO:0000255" key="1">
    <source>
        <dbReference type="HAMAP-Rule" id="MF_01315"/>
    </source>
</evidence>
<evidence type="ECO:0000256" key="2">
    <source>
        <dbReference type="SAM" id="MobiDB-lite"/>
    </source>
</evidence>
<evidence type="ECO:0000305" key="3"/>
<proteinExistence type="inferred from homology"/>
<accession>P48137</accession>
<dbReference type="EMBL" id="U30821">
    <property type="protein sequence ID" value="AAA81289.1"/>
    <property type="molecule type" value="Genomic_DNA"/>
</dbReference>
<dbReference type="PIR" id="T06946">
    <property type="entry name" value="T06946"/>
</dbReference>
<dbReference type="RefSeq" id="NP_043258.1">
    <property type="nucleotide sequence ID" value="NC_001675.1"/>
</dbReference>
<dbReference type="SMR" id="P48137"/>
<dbReference type="GeneID" id="801681"/>
<dbReference type="GO" id="GO:0009842">
    <property type="term" value="C:cyanelle"/>
    <property type="evidence" value="ECO:0007669"/>
    <property type="project" value="UniProtKB-SubCell"/>
</dbReference>
<dbReference type="GO" id="GO:0005829">
    <property type="term" value="C:cytosol"/>
    <property type="evidence" value="ECO:0007669"/>
    <property type="project" value="TreeGrafter"/>
</dbReference>
<dbReference type="GO" id="GO:0015935">
    <property type="term" value="C:small ribosomal subunit"/>
    <property type="evidence" value="ECO:0007669"/>
    <property type="project" value="TreeGrafter"/>
</dbReference>
<dbReference type="GO" id="GO:0019843">
    <property type="term" value="F:rRNA binding"/>
    <property type="evidence" value="ECO:0007669"/>
    <property type="project" value="UniProtKB-KW"/>
</dbReference>
<dbReference type="GO" id="GO:0003735">
    <property type="term" value="F:structural constituent of ribosome"/>
    <property type="evidence" value="ECO:0007669"/>
    <property type="project" value="InterPro"/>
</dbReference>
<dbReference type="GO" id="GO:0006412">
    <property type="term" value="P:translation"/>
    <property type="evidence" value="ECO:0007669"/>
    <property type="project" value="InterPro"/>
</dbReference>
<dbReference type="FunFam" id="1.10.8.50:FF:000001">
    <property type="entry name" value="30S ribosomal protein S13"/>
    <property type="match status" value="1"/>
</dbReference>
<dbReference type="FunFam" id="4.10.910.10:FF:000001">
    <property type="entry name" value="30S ribosomal protein S13"/>
    <property type="match status" value="1"/>
</dbReference>
<dbReference type="Gene3D" id="1.10.8.50">
    <property type="match status" value="1"/>
</dbReference>
<dbReference type="Gene3D" id="4.10.910.10">
    <property type="entry name" value="30s ribosomal protein s13, domain 2"/>
    <property type="match status" value="1"/>
</dbReference>
<dbReference type="HAMAP" id="MF_01315">
    <property type="entry name" value="Ribosomal_uS13"/>
    <property type="match status" value="1"/>
</dbReference>
<dbReference type="InterPro" id="IPR027437">
    <property type="entry name" value="Rbsml_uS13_C"/>
</dbReference>
<dbReference type="InterPro" id="IPR001892">
    <property type="entry name" value="Ribosomal_uS13"/>
</dbReference>
<dbReference type="InterPro" id="IPR010979">
    <property type="entry name" value="Ribosomal_uS13-like_H2TH"/>
</dbReference>
<dbReference type="InterPro" id="IPR019980">
    <property type="entry name" value="Ribosomal_uS13_bac-type"/>
</dbReference>
<dbReference type="InterPro" id="IPR018269">
    <property type="entry name" value="Ribosomal_uS13_CS"/>
</dbReference>
<dbReference type="NCBIfam" id="TIGR03631">
    <property type="entry name" value="uS13_bact"/>
    <property type="match status" value="1"/>
</dbReference>
<dbReference type="PANTHER" id="PTHR10871">
    <property type="entry name" value="30S RIBOSOMAL PROTEIN S13/40S RIBOSOMAL PROTEIN S18"/>
    <property type="match status" value="1"/>
</dbReference>
<dbReference type="PANTHER" id="PTHR10871:SF1">
    <property type="entry name" value="SMALL RIBOSOMAL SUBUNIT PROTEIN US13M"/>
    <property type="match status" value="1"/>
</dbReference>
<dbReference type="Pfam" id="PF00416">
    <property type="entry name" value="Ribosomal_S13"/>
    <property type="match status" value="1"/>
</dbReference>
<dbReference type="PIRSF" id="PIRSF002134">
    <property type="entry name" value="Ribosomal_S13"/>
    <property type="match status" value="1"/>
</dbReference>
<dbReference type="SUPFAM" id="SSF46946">
    <property type="entry name" value="S13-like H2TH domain"/>
    <property type="match status" value="1"/>
</dbReference>
<dbReference type="PROSITE" id="PS00646">
    <property type="entry name" value="RIBOSOMAL_S13_1"/>
    <property type="match status" value="1"/>
</dbReference>
<dbReference type="PROSITE" id="PS50159">
    <property type="entry name" value="RIBOSOMAL_S13_2"/>
    <property type="match status" value="1"/>
</dbReference>